<organism>
    <name type="scientific">Avian sarcoma virus CT10</name>
    <name type="common">Avian sarcoma virus (strain CT10)</name>
    <dbReference type="NCBI Taxonomy" id="11878"/>
    <lineage>
        <taxon>Viruses</taxon>
        <taxon>Riboviria</taxon>
        <taxon>Pararnavirae</taxon>
        <taxon>Artverviricota</taxon>
        <taxon>Revtraviricetes</taxon>
        <taxon>Ortervirales</taxon>
        <taxon>Retroviridae</taxon>
        <taxon>Orthoretrovirinae</taxon>
        <taxon>Alpharetrovirus</taxon>
    </lineage>
</organism>
<proteinExistence type="predicted"/>
<protein>
    <recommendedName>
        <fullName>P47(GAG-CRK) protein</fullName>
    </recommendedName>
</protein>
<name>GAGC_AVISC</name>
<comment type="domain">
    <text evidence="5">Late-budding domains (L domains) are short sequence motifs essential for viral particle budding. They recruit proteins of the host ESCRT machinery (Endosomal Sorting Complex Required for Transport) or ESCRT-associated proteins. Gag contains one L domain: a PPXY motif which potentially interacts with the WW domain 3 of NEDD4 E3 ubiquitin ligase (Potential).</text>
</comment>
<sequence length="440" mass="47176">MEAVIKVISSACKTYCGKTSPSKKEIGAMLSLLQKEGLLMSPSDLYSPRSWDPITAALTQRAMELGKSGELKTWGLVLGALEAAREEQEQVTSEQAKFWLGLGGGRVSPPGPECIEKPATERRIDKGEEVGETTVQRDAKMAPEETATPKTVGTSCYYCGAAIGCNCATASAPPPPYVGSGLYPSLAGVGEQQGQGGDTPRGAEQPRAGRGAGHRGLRRPAGRGQRVRPAGGAALMAGQFDSEDRGSWYWGRLSRGDAVSLLQGQRHGTFLVRDSGSIPGDFVLSVSESSRVSHYIVNSLGPAGGRRAGGEGPGAPGLNPTRFLIGDQVFDSLPSLLEFYKIHYLDTTTLIEPVSRSRQNSGVILRQEEVEYVRALFDFKGNDDGDLPFKKGDILKIRDKPEEQWWNAEDMDGKRGMIPVPYVEKCRPSSASVSTLTGGR</sequence>
<evidence type="ECO:0000250" key="1"/>
<evidence type="ECO:0000255" key="2">
    <source>
        <dbReference type="PROSITE-ProRule" id="PRU00191"/>
    </source>
</evidence>
<evidence type="ECO:0000255" key="3">
    <source>
        <dbReference type="PROSITE-ProRule" id="PRU00192"/>
    </source>
</evidence>
<evidence type="ECO:0000256" key="4">
    <source>
        <dbReference type="SAM" id="MobiDB-lite"/>
    </source>
</evidence>
<evidence type="ECO:0000305" key="5"/>
<accession>P05433</accession>
<accession>Q85486</accession>
<dbReference type="EMBL" id="Y00302">
    <property type="protein sequence ID" value="CAA68407.1"/>
    <property type="molecule type" value="Genomic_RNA"/>
</dbReference>
<dbReference type="PIR" id="A29851">
    <property type="entry name" value="A29851"/>
</dbReference>
<dbReference type="PIR" id="B29851">
    <property type="entry name" value="TVFV10"/>
</dbReference>
<dbReference type="RefSeq" id="YP_009508242.1">
    <property type="nucleotide sequence ID" value="NC_038922.1"/>
</dbReference>
<dbReference type="SMR" id="P05433"/>
<dbReference type="IntAct" id="P05433">
    <property type="interactions" value="1"/>
</dbReference>
<dbReference type="MINT" id="P05433"/>
<dbReference type="GeneID" id="37619590"/>
<dbReference type="OrthoDB" id="19610at10239"/>
<dbReference type="Proteomes" id="UP000149007">
    <property type="component" value="Genome"/>
</dbReference>
<dbReference type="GO" id="GO:0030971">
    <property type="term" value="F:receptor tyrosine kinase binding"/>
    <property type="evidence" value="ECO:0007669"/>
    <property type="project" value="TreeGrafter"/>
</dbReference>
<dbReference type="GO" id="GO:0035591">
    <property type="term" value="F:signaling adaptor activity"/>
    <property type="evidence" value="ECO:0007669"/>
    <property type="project" value="TreeGrafter"/>
</dbReference>
<dbReference type="GO" id="GO:0016477">
    <property type="term" value="P:cell migration"/>
    <property type="evidence" value="ECO:0007669"/>
    <property type="project" value="TreeGrafter"/>
</dbReference>
<dbReference type="GO" id="GO:0007167">
    <property type="term" value="P:enzyme-linked receptor protein signaling pathway"/>
    <property type="evidence" value="ECO:0007669"/>
    <property type="project" value="TreeGrafter"/>
</dbReference>
<dbReference type="GO" id="GO:1902531">
    <property type="term" value="P:regulation of intracellular signal transduction"/>
    <property type="evidence" value="ECO:0007669"/>
    <property type="project" value="UniProtKB-ARBA"/>
</dbReference>
<dbReference type="GO" id="GO:0039702">
    <property type="term" value="P:viral budding via host ESCRT complex"/>
    <property type="evidence" value="ECO:0007669"/>
    <property type="project" value="UniProtKB-KW"/>
</dbReference>
<dbReference type="CDD" id="cd09926">
    <property type="entry name" value="SH2_CRK_like"/>
    <property type="match status" value="1"/>
</dbReference>
<dbReference type="CDD" id="cd11758">
    <property type="entry name" value="SH3_CRK_N"/>
    <property type="match status" value="1"/>
</dbReference>
<dbReference type="FunFam" id="2.30.30.40:FF:000157">
    <property type="entry name" value="adapter molecule crk isoform X1"/>
    <property type="match status" value="1"/>
</dbReference>
<dbReference type="FunFam" id="3.30.505.10:FF:000026">
    <property type="entry name" value="adapter molecule crk isoform X1"/>
    <property type="match status" value="1"/>
</dbReference>
<dbReference type="Gene3D" id="1.10.150.90">
    <property type="entry name" value="Immunodeficiency lentiviruses, gag gene matrix protein p17"/>
    <property type="match status" value="1"/>
</dbReference>
<dbReference type="Gene3D" id="3.30.505.10">
    <property type="entry name" value="SH2 domain"/>
    <property type="match status" value="1"/>
</dbReference>
<dbReference type="Gene3D" id="2.30.30.40">
    <property type="entry name" value="SH3 Domains"/>
    <property type="match status" value="1"/>
</dbReference>
<dbReference type="InterPro" id="IPR035457">
    <property type="entry name" value="CRK_SH3_N"/>
</dbReference>
<dbReference type="InterPro" id="IPR004028">
    <property type="entry name" value="Gag_M"/>
</dbReference>
<dbReference type="InterPro" id="IPR012344">
    <property type="entry name" value="Matrix_HIV/RSV_N"/>
</dbReference>
<dbReference type="InterPro" id="IPR010999">
    <property type="entry name" value="Retrovr_matrix"/>
</dbReference>
<dbReference type="InterPro" id="IPR000980">
    <property type="entry name" value="SH2"/>
</dbReference>
<dbReference type="InterPro" id="IPR036860">
    <property type="entry name" value="SH2_dom_sf"/>
</dbReference>
<dbReference type="InterPro" id="IPR036028">
    <property type="entry name" value="SH3-like_dom_sf"/>
</dbReference>
<dbReference type="InterPro" id="IPR001452">
    <property type="entry name" value="SH3_domain"/>
</dbReference>
<dbReference type="InterPro" id="IPR051184">
    <property type="entry name" value="Tyrosine-phos_adapter"/>
</dbReference>
<dbReference type="PANTHER" id="PTHR19969:SF8">
    <property type="entry name" value="ADAPTER MOLECULE CRK"/>
    <property type="match status" value="1"/>
</dbReference>
<dbReference type="PANTHER" id="PTHR19969">
    <property type="entry name" value="SH2-SH3 ADAPTOR PROTEIN-RELATED"/>
    <property type="match status" value="1"/>
</dbReference>
<dbReference type="Pfam" id="PF02813">
    <property type="entry name" value="Retro_M"/>
    <property type="match status" value="1"/>
</dbReference>
<dbReference type="Pfam" id="PF00017">
    <property type="entry name" value="SH2"/>
    <property type="match status" value="1"/>
</dbReference>
<dbReference type="Pfam" id="PF00018">
    <property type="entry name" value="SH3_1"/>
    <property type="match status" value="1"/>
</dbReference>
<dbReference type="PRINTS" id="PR00401">
    <property type="entry name" value="SH2DOMAIN"/>
</dbReference>
<dbReference type="PRINTS" id="PR00452">
    <property type="entry name" value="SH3DOMAIN"/>
</dbReference>
<dbReference type="SMART" id="SM00252">
    <property type="entry name" value="SH2"/>
    <property type="match status" value="1"/>
</dbReference>
<dbReference type="SMART" id="SM00326">
    <property type="entry name" value="SH3"/>
    <property type="match status" value="1"/>
</dbReference>
<dbReference type="SUPFAM" id="SSF47836">
    <property type="entry name" value="Retroviral matrix proteins"/>
    <property type="match status" value="1"/>
</dbReference>
<dbReference type="SUPFAM" id="SSF55550">
    <property type="entry name" value="SH2 domain"/>
    <property type="match status" value="1"/>
</dbReference>
<dbReference type="SUPFAM" id="SSF50044">
    <property type="entry name" value="SH3-domain"/>
    <property type="match status" value="1"/>
</dbReference>
<dbReference type="PROSITE" id="PS50001">
    <property type="entry name" value="SH2"/>
    <property type="match status" value="1"/>
</dbReference>
<dbReference type="PROSITE" id="PS50002">
    <property type="entry name" value="SH3"/>
    <property type="match status" value="1"/>
</dbReference>
<feature type="chain" id="PRO_0000125473" description="P47(GAG-CRK) protein">
    <location>
        <begin position="1"/>
        <end position="440"/>
    </location>
</feature>
<feature type="domain" description="SH2" evidence="2">
    <location>
        <begin position="248"/>
        <end position="354"/>
    </location>
</feature>
<feature type="domain" description="SH3" evidence="3">
    <location>
        <begin position="368"/>
        <end position="428"/>
    </location>
</feature>
<feature type="region of interest" description="Gag first part">
    <location>
        <begin position="1"/>
        <end position="208"/>
    </location>
</feature>
<feature type="region of interest" description="Disordered" evidence="4">
    <location>
        <begin position="183"/>
        <end position="230"/>
    </location>
</feature>
<feature type="region of interest" description="CRK">
    <location>
        <begin position="209"/>
        <end position="437"/>
    </location>
</feature>
<feature type="region of interest" description="Gag second part">
    <location>
        <begin position="438"/>
        <end position="440"/>
    </location>
</feature>
<feature type="short sequence motif" description="PPXY motif" evidence="1">
    <location>
        <begin position="174"/>
        <end position="177"/>
    </location>
</feature>
<feature type="compositionally biased region" description="Basic residues" evidence="4">
    <location>
        <begin position="212"/>
        <end position="221"/>
    </location>
</feature>
<keyword id="KW-0945">Host-virus interaction</keyword>
<keyword id="KW-0553">Oncogene</keyword>
<keyword id="KW-0727">SH2 domain</keyword>
<keyword id="KW-0728">SH3 domain</keyword>
<keyword id="KW-1198">Viral budding</keyword>
<keyword id="KW-1187">Viral budding via the host ESCRT complexes</keyword>
<keyword id="KW-1188">Viral release from host cell</keyword>
<organismHost>
    <name type="scientific">Galliformes</name>
    <dbReference type="NCBI Taxonomy" id="8976"/>
</organismHost>
<reference key="1">
    <citation type="journal article" date="1988" name="Nature">
        <title>A novel viral oncogene with structural similarity to phospholipase C.</title>
        <authorList>
            <person name="Mayer B.J."/>
            <person name="Hamaguchi M."/>
            <person name="Hanafusa H."/>
        </authorList>
    </citation>
    <scope>NUCLEOTIDE SEQUENCE [GENOMIC RNA]</scope>
</reference>